<sequence length="261" mass="26602">MAPTPWISFTTDYGLADGFVAACHGVLARLTPTTRVIDVTHLVPPGDVRRGAAVLAQAVPYLPAAVHLAVVDPGVGTARRAIALAAGDGLLVGPDNGLLLDAAAALGGVRAAVELTNRDWLGADVSATFHGRDIFAPVAARLALGAPLADAGPAVEPSTLVRLPVPLVRPEADGFTAEVLTVDHFGNVQLAASGSLLEPLPRSLRVERQPAVRVHTFGDVAPGELLVHVDSTGQVAVAVNGGRAADLLGVTPGDRLRVTAG</sequence>
<reference key="1">
    <citation type="journal article" date="2007" name="Proc. Natl. Acad. Sci. U.S.A.">
        <title>Genome sequencing reveals complex secondary metabolome in the marine actinomycete Salinispora tropica.</title>
        <authorList>
            <person name="Udwary D.W."/>
            <person name="Zeigler L."/>
            <person name="Asolkar R.N."/>
            <person name="Singan V."/>
            <person name="Lapidus A."/>
            <person name="Fenical W."/>
            <person name="Jensen P.R."/>
            <person name="Moore B.S."/>
        </authorList>
    </citation>
    <scope>NUCLEOTIDE SEQUENCE [LARGE SCALE GENOMIC DNA]</scope>
    <source>
        <strain>ATCC BAA-916 / DSM 44818 / JCM 13857 / NBRC 105044 / CNB-440</strain>
    </source>
</reference>
<reference key="2">
    <citation type="journal article" date="2020" name="ChemBioChem">
        <title>An Enzyme Containing the Conserved Domain of Unknown Function DUF62 Acts as a Stereoselective (Rs,Sc)-S-Adenosylmethionine Hydrolase.</title>
        <authorList>
            <person name="Kornfuehrer T."/>
            <person name="Romanowski S."/>
            <person name="de Crecy-Lagard V."/>
            <person name="Hanson A.D."/>
            <person name="Eustaquio A.S."/>
        </authorList>
    </citation>
    <scope>FUNCTION</scope>
    <scope>CATALYTIC ACTIVITY</scope>
    <scope>BIOPHYSICOCHEMICAL PROPERTIES</scope>
    <source>
        <strain>ATCC BAA-916 / DSM 44818 / JCM 13857 / NBRC 105044 / CNB-440</strain>
    </source>
</reference>
<comment type="function">
    <text evidence="2">Specifically hydrolyzes (R)-S-adenosyl-L-methionine ((R)-SAM), the inactive form of the ubiquitous cofactor SAM, into adenosine and L-methionine. Is stereoselective as it cannot use the active form of SAM, (S)-S-adenosyl-L-methionine, as substrate. Likely plays a role in preventing accumulation of (R)-S-adenosyl-L-methionine in cells; maintenance of (S)-S-denosyl-L-methionine homochirality is important for cellular health given that the (R)-form is largely inactive as a methyl donor and can function as an inhibitor of methyltransferases.</text>
</comment>
<comment type="catalytic activity">
    <reaction evidence="2">
        <text>(R)-S-adenosyl-L-methionine + H2O = adenosine + L-methionine + H(+)</text>
        <dbReference type="Rhea" id="RHEA:67240"/>
        <dbReference type="ChEBI" id="CHEBI:15377"/>
        <dbReference type="ChEBI" id="CHEBI:15378"/>
        <dbReference type="ChEBI" id="CHEBI:16335"/>
        <dbReference type="ChEBI" id="CHEBI:57844"/>
        <dbReference type="ChEBI" id="CHEBI:142093"/>
        <dbReference type="EC" id="3.13.2.3"/>
    </reaction>
    <physiologicalReaction direction="left-to-right" evidence="5">
        <dbReference type="Rhea" id="RHEA:67241"/>
    </physiologicalReaction>
</comment>
<comment type="biophysicochemical properties">
    <kinetics>
        <KM evidence="2">0.63 uM for (R)-S-adenosyl-L-methionine</KM>
        <text evidence="2">kcat is 0.0045 sec(-1).</text>
    </kinetics>
</comment>
<comment type="similarity">
    <text evidence="4">Belongs to the SAM hydrolase / SAM-dependent halogenase family.</text>
</comment>
<evidence type="ECO:0000250" key="1">
    <source>
        <dbReference type="UniProtKB" id="O58212"/>
    </source>
</evidence>
<evidence type="ECO:0000269" key="2">
    <source>
    </source>
</evidence>
<evidence type="ECO:0000303" key="3">
    <source>
    </source>
</evidence>
<evidence type="ECO:0000305" key="4"/>
<evidence type="ECO:0000305" key="5">
    <source>
    </source>
</evidence>
<evidence type="ECO:0000312" key="6">
    <source>
        <dbReference type="EMBL" id="ABP53872.1"/>
    </source>
</evidence>
<gene>
    <name evidence="6" type="ordered locus">Strop_1405</name>
</gene>
<protein>
    <recommendedName>
        <fullName evidence="3">(R)-S-adenosyl-L-methionine hydrolase</fullName>
        <ecNumber evidence="2">3.13.2.3</ecNumber>
    </recommendedName>
</protein>
<organism>
    <name type="scientific">Salinispora tropica (strain ATCC BAA-916 / DSM 44818 / JCM 13857 / NBRC 105044 / CNB-440)</name>
    <dbReference type="NCBI Taxonomy" id="369723"/>
    <lineage>
        <taxon>Bacteria</taxon>
        <taxon>Bacillati</taxon>
        <taxon>Actinomycetota</taxon>
        <taxon>Actinomycetes</taxon>
        <taxon>Micromonosporales</taxon>
        <taxon>Micromonosporaceae</taxon>
        <taxon>Salinispora</taxon>
    </lineage>
</organism>
<feature type="chain" id="PRO_0000455605" description="(R)-S-adenosyl-L-methionine hydrolase">
    <location>
        <begin position="1"/>
        <end position="261"/>
    </location>
</feature>
<feature type="binding site" evidence="1">
    <location>
        <position position="12"/>
    </location>
    <ligand>
        <name>adenosine</name>
        <dbReference type="ChEBI" id="CHEBI:16335"/>
    </ligand>
</feature>
<feature type="binding site" evidence="1">
    <location>
        <position position="72"/>
    </location>
    <ligand>
        <name>adenosine</name>
        <dbReference type="ChEBI" id="CHEBI:16335"/>
    </ligand>
</feature>
<feature type="binding site" evidence="1">
    <location>
        <position position="187"/>
    </location>
    <ligand>
        <name>(R)-S-adenosyl-L-methionine</name>
        <dbReference type="ChEBI" id="CHEBI:142093"/>
    </ligand>
</feature>
<feature type="binding site" evidence="1">
    <location>
        <position position="187"/>
    </location>
    <ligand>
        <name>adenosine</name>
        <dbReference type="ChEBI" id="CHEBI:16335"/>
    </ligand>
</feature>
<feature type="binding site" evidence="1">
    <location>
        <position position="231"/>
    </location>
    <ligand>
        <name>(R)-S-adenosyl-L-methionine</name>
        <dbReference type="ChEBI" id="CHEBI:142093"/>
    </ligand>
</feature>
<feature type="binding site" evidence="1">
    <location>
        <position position="239"/>
    </location>
    <ligand>
        <name>(R)-S-adenosyl-L-methionine</name>
        <dbReference type="ChEBI" id="CHEBI:142093"/>
    </ligand>
</feature>
<feature type="binding site" evidence="1">
    <location>
        <position position="239"/>
    </location>
    <ligand>
        <name>adenosine</name>
        <dbReference type="ChEBI" id="CHEBI:16335"/>
    </ligand>
</feature>
<feature type="site" description="Important for activity" evidence="1">
    <location>
        <position position="72"/>
    </location>
</feature>
<feature type="site" description="Important for activity" evidence="1">
    <location>
        <position position="79"/>
    </location>
</feature>
<feature type="site" description="Important for activity" evidence="1">
    <location>
        <position position="130"/>
    </location>
</feature>
<dbReference type="EC" id="3.13.2.3" evidence="2"/>
<dbReference type="EMBL" id="CP000667">
    <property type="protein sequence ID" value="ABP53872.1"/>
    <property type="molecule type" value="Genomic_DNA"/>
</dbReference>
<dbReference type="RefSeq" id="WP_011905304.1">
    <property type="nucleotide sequence ID" value="NC_009380.1"/>
</dbReference>
<dbReference type="SMR" id="A4X4S2"/>
<dbReference type="STRING" id="369723.Strop_1405"/>
<dbReference type="KEGG" id="stp:Strop_1405"/>
<dbReference type="PATRIC" id="fig|369723.5.peg.1432"/>
<dbReference type="eggNOG" id="COG1912">
    <property type="taxonomic scope" value="Bacteria"/>
</dbReference>
<dbReference type="HOGENOM" id="CLU_059734_1_0_11"/>
<dbReference type="Proteomes" id="UP000000235">
    <property type="component" value="Chromosome"/>
</dbReference>
<dbReference type="GO" id="GO:0016787">
    <property type="term" value="F:hydrolase activity"/>
    <property type="evidence" value="ECO:0007669"/>
    <property type="project" value="UniProtKB-KW"/>
</dbReference>
<dbReference type="Gene3D" id="2.40.30.90">
    <property type="entry name" value="Bacterial fluorinating enzyme like"/>
    <property type="match status" value="1"/>
</dbReference>
<dbReference type="Gene3D" id="3.40.50.10790">
    <property type="entry name" value="S-adenosyl-l-methionine hydroxide adenosyltransferase, N-terminal"/>
    <property type="match status" value="1"/>
</dbReference>
<dbReference type="InterPro" id="IPR046470">
    <property type="entry name" value="SAM_HAT_C"/>
</dbReference>
<dbReference type="InterPro" id="IPR046469">
    <property type="entry name" value="SAM_HAT_N"/>
</dbReference>
<dbReference type="InterPro" id="IPR002747">
    <property type="entry name" value="SAM_OH_AdoTrfase"/>
</dbReference>
<dbReference type="InterPro" id="IPR023227">
    <property type="entry name" value="SAM_OH_AdoTrfase_C_sf"/>
</dbReference>
<dbReference type="InterPro" id="IPR023228">
    <property type="entry name" value="SAM_OH_AdoTrfase_N_sf"/>
</dbReference>
<dbReference type="PANTHER" id="PTHR35092">
    <property type="entry name" value="CHLORINASE MJ1651"/>
    <property type="match status" value="1"/>
</dbReference>
<dbReference type="PANTHER" id="PTHR35092:SF1">
    <property type="entry name" value="CHLORINASE MJ1651"/>
    <property type="match status" value="1"/>
</dbReference>
<dbReference type="Pfam" id="PF20257">
    <property type="entry name" value="SAM_HAT_C"/>
    <property type="match status" value="1"/>
</dbReference>
<dbReference type="Pfam" id="PF01887">
    <property type="entry name" value="SAM_HAT_N"/>
    <property type="match status" value="1"/>
</dbReference>
<dbReference type="PIRSF" id="PIRSF006779">
    <property type="entry name" value="UCP006779"/>
    <property type="match status" value="1"/>
</dbReference>
<dbReference type="SUPFAM" id="SSF101852">
    <property type="entry name" value="Bacterial fluorinating enzyme, C-terminal domain"/>
    <property type="match status" value="1"/>
</dbReference>
<dbReference type="SUPFAM" id="SSF102522">
    <property type="entry name" value="Bacterial fluorinating enzyme, N-terminal domain"/>
    <property type="match status" value="1"/>
</dbReference>
<proteinExistence type="evidence at protein level"/>
<accession>A4X4S2</accession>
<keyword id="KW-0378">Hydrolase</keyword>
<keyword id="KW-1185">Reference proteome</keyword>
<keyword id="KW-0949">S-adenosyl-L-methionine</keyword>
<name>RSAMH_SALTO</name>